<gene>
    <name evidence="1" type="primary">aroC</name>
    <name type="ordered locus">Meso_0730</name>
</gene>
<keyword id="KW-0028">Amino-acid biosynthesis</keyword>
<keyword id="KW-0057">Aromatic amino acid biosynthesis</keyword>
<keyword id="KW-0274">FAD</keyword>
<keyword id="KW-0285">Flavoprotein</keyword>
<keyword id="KW-0288">FMN</keyword>
<keyword id="KW-0456">Lyase</keyword>
<keyword id="KW-0521">NADP</keyword>
<organism>
    <name type="scientific">Chelativorans sp. (strain BNC1)</name>
    <dbReference type="NCBI Taxonomy" id="266779"/>
    <lineage>
        <taxon>Bacteria</taxon>
        <taxon>Pseudomonadati</taxon>
        <taxon>Pseudomonadota</taxon>
        <taxon>Alphaproteobacteria</taxon>
        <taxon>Hyphomicrobiales</taxon>
        <taxon>Phyllobacteriaceae</taxon>
        <taxon>Chelativorans</taxon>
    </lineage>
</organism>
<name>AROC_CHESB</name>
<accession>Q11KE5</accession>
<proteinExistence type="inferred from homology"/>
<sequence>MSHNTFGHLFRVTTWGESHGPAIGCVVDGCPPGIHFTQAEIQADLDRRRPGQSRFVTQRREPDEVKILSGVMQDGETLVTTGTPISMLIENVDQRSKDYGEIAERYRPGHADYTYDAKYGVRDYRGGGRSSARETATRVAAGALARKIVPGMVVRGALISMGEKEIDRANWDWDFLHDPENPFFTPDPKSVSEFADYLDGVRKAGSSVGAVIEIVAEGVPAGLGAPLYGKLDQDICANLMSINAVKGVEIGIGFQAARIHGEENADEMRSGNDGYPRFLSNNAGGILGGISTGQPIIARFAVKPTSSILTPRRSIDRKGAEVEVVTKGRHDPCVGIRAVPIGEAMVACAIADHYLRHRGQTGKG</sequence>
<protein>
    <recommendedName>
        <fullName evidence="1">Chorismate synthase</fullName>
        <shortName evidence="1">CS</shortName>
        <ecNumber evidence="1">4.2.3.5</ecNumber>
    </recommendedName>
    <alternativeName>
        <fullName evidence="1">5-enolpyruvylshikimate-3-phosphate phospholyase</fullName>
    </alternativeName>
</protein>
<dbReference type="EC" id="4.2.3.5" evidence="1"/>
<dbReference type="EMBL" id="CP000390">
    <property type="protein sequence ID" value="ABG62130.1"/>
    <property type="molecule type" value="Genomic_DNA"/>
</dbReference>
<dbReference type="SMR" id="Q11KE5"/>
<dbReference type="STRING" id="266779.Meso_0730"/>
<dbReference type="KEGG" id="mes:Meso_0730"/>
<dbReference type="eggNOG" id="COG0082">
    <property type="taxonomic scope" value="Bacteria"/>
</dbReference>
<dbReference type="HOGENOM" id="CLU_034547_0_0_5"/>
<dbReference type="OrthoDB" id="9771806at2"/>
<dbReference type="UniPathway" id="UPA00053">
    <property type="reaction ID" value="UER00090"/>
</dbReference>
<dbReference type="GO" id="GO:0005829">
    <property type="term" value="C:cytosol"/>
    <property type="evidence" value="ECO:0007669"/>
    <property type="project" value="TreeGrafter"/>
</dbReference>
<dbReference type="GO" id="GO:0004107">
    <property type="term" value="F:chorismate synthase activity"/>
    <property type="evidence" value="ECO:0007669"/>
    <property type="project" value="UniProtKB-UniRule"/>
</dbReference>
<dbReference type="GO" id="GO:0010181">
    <property type="term" value="F:FMN binding"/>
    <property type="evidence" value="ECO:0007669"/>
    <property type="project" value="TreeGrafter"/>
</dbReference>
<dbReference type="GO" id="GO:0008652">
    <property type="term" value="P:amino acid biosynthetic process"/>
    <property type="evidence" value="ECO:0007669"/>
    <property type="project" value="UniProtKB-KW"/>
</dbReference>
<dbReference type="GO" id="GO:0009073">
    <property type="term" value="P:aromatic amino acid family biosynthetic process"/>
    <property type="evidence" value="ECO:0007669"/>
    <property type="project" value="UniProtKB-KW"/>
</dbReference>
<dbReference type="GO" id="GO:0009423">
    <property type="term" value="P:chorismate biosynthetic process"/>
    <property type="evidence" value="ECO:0007669"/>
    <property type="project" value="UniProtKB-UniRule"/>
</dbReference>
<dbReference type="CDD" id="cd07304">
    <property type="entry name" value="Chorismate_synthase"/>
    <property type="match status" value="1"/>
</dbReference>
<dbReference type="Gene3D" id="3.60.150.10">
    <property type="entry name" value="Chorismate synthase AroC"/>
    <property type="match status" value="1"/>
</dbReference>
<dbReference type="HAMAP" id="MF_00300">
    <property type="entry name" value="Chorismate_synth"/>
    <property type="match status" value="1"/>
</dbReference>
<dbReference type="InterPro" id="IPR000453">
    <property type="entry name" value="Chorismate_synth"/>
</dbReference>
<dbReference type="InterPro" id="IPR035904">
    <property type="entry name" value="Chorismate_synth_AroC_sf"/>
</dbReference>
<dbReference type="InterPro" id="IPR020541">
    <property type="entry name" value="Chorismate_synthase_CS"/>
</dbReference>
<dbReference type="NCBIfam" id="TIGR00033">
    <property type="entry name" value="aroC"/>
    <property type="match status" value="1"/>
</dbReference>
<dbReference type="NCBIfam" id="NF003793">
    <property type="entry name" value="PRK05382.1"/>
    <property type="match status" value="1"/>
</dbReference>
<dbReference type="PANTHER" id="PTHR21085">
    <property type="entry name" value="CHORISMATE SYNTHASE"/>
    <property type="match status" value="1"/>
</dbReference>
<dbReference type="PANTHER" id="PTHR21085:SF0">
    <property type="entry name" value="CHORISMATE SYNTHASE"/>
    <property type="match status" value="1"/>
</dbReference>
<dbReference type="Pfam" id="PF01264">
    <property type="entry name" value="Chorismate_synt"/>
    <property type="match status" value="1"/>
</dbReference>
<dbReference type="PIRSF" id="PIRSF001456">
    <property type="entry name" value="Chorismate_synth"/>
    <property type="match status" value="1"/>
</dbReference>
<dbReference type="SUPFAM" id="SSF103263">
    <property type="entry name" value="Chorismate synthase, AroC"/>
    <property type="match status" value="1"/>
</dbReference>
<dbReference type="PROSITE" id="PS00787">
    <property type="entry name" value="CHORISMATE_SYNTHASE_1"/>
    <property type="match status" value="1"/>
</dbReference>
<dbReference type="PROSITE" id="PS00788">
    <property type="entry name" value="CHORISMATE_SYNTHASE_2"/>
    <property type="match status" value="1"/>
</dbReference>
<dbReference type="PROSITE" id="PS00789">
    <property type="entry name" value="CHORISMATE_SYNTHASE_3"/>
    <property type="match status" value="1"/>
</dbReference>
<reference key="1">
    <citation type="submission" date="2006-06" db="EMBL/GenBank/DDBJ databases">
        <title>Complete sequence of chromosome of Mesorhizobium sp. BNC1.</title>
        <authorList>
            <consortium name="US DOE Joint Genome Institute"/>
            <person name="Copeland A."/>
            <person name="Lucas S."/>
            <person name="Lapidus A."/>
            <person name="Barry K."/>
            <person name="Detter J.C."/>
            <person name="Glavina del Rio T."/>
            <person name="Hammon N."/>
            <person name="Israni S."/>
            <person name="Dalin E."/>
            <person name="Tice H."/>
            <person name="Pitluck S."/>
            <person name="Chertkov O."/>
            <person name="Brettin T."/>
            <person name="Bruce D."/>
            <person name="Han C."/>
            <person name="Tapia R."/>
            <person name="Gilna P."/>
            <person name="Schmutz J."/>
            <person name="Larimer F."/>
            <person name="Land M."/>
            <person name="Hauser L."/>
            <person name="Kyrpides N."/>
            <person name="Mikhailova N."/>
            <person name="Richardson P."/>
        </authorList>
    </citation>
    <scope>NUCLEOTIDE SEQUENCE [LARGE SCALE GENOMIC DNA]</scope>
    <source>
        <strain>BNC1</strain>
    </source>
</reference>
<comment type="function">
    <text evidence="1">Catalyzes the anti-1,4-elimination of the C-3 phosphate and the C-6 proR hydrogen from 5-enolpyruvylshikimate-3-phosphate (EPSP) to yield chorismate, which is the branch point compound that serves as the starting substrate for the three terminal pathways of aromatic amino acid biosynthesis. This reaction introduces a second double bond into the aromatic ring system.</text>
</comment>
<comment type="catalytic activity">
    <reaction evidence="1">
        <text>5-O-(1-carboxyvinyl)-3-phosphoshikimate = chorismate + phosphate</text>
        <dbReference type="Rhea" id="RHEA:21020"/>
        <dbReference type="ChEBI" id="CHEBI:29748"/>
        <dbReference type="ChEBI" id="CHEBI:43474"/>
        <dbReference type="ChEBI" id="CHEBI:57701"/>
        <dbReference type="EC" id="4.2.3.5"/>
    </reaction>
</comment>
<comment type="cofactor">
    <cofactor evidence="1">
        <name>FMNH2</name>
        <dbReference type="ChEBI" id="CHEBI:57618"/>
    </cofactor>
    <text evidence="1">Reduced FMN (FMNH(2)).</text>
</comment>
<comment type="pathway">
    <text evidence="1">Metabolic intermediate biosynthesis; chorismate biosynthesis; chorismate from D-erythrose 4-phosphate and phosphoenolpyruvate: step 7/7.</text>
</comment>
<comment type="subunit">
    <text evidence="1">Homotetramer.</text>
</comment>
<comment type="similarity">
    <text evidence="1">Belongs to the chorismate synthase family.</text>
</comment>
<evidence type="ECO:0000255" key="1">
    <source>
        <dbReference type="HAMAP-Rule" id="MF_00300"/>
    </source>
</evidence>
<feature type="chain" id="PRO_0000256301" description="Chorismate synthase">
    <location>
        <begin position="1"/>
        <end position="364"/>
    </location>
</feature>
<feature type="binding site" evidence="1">
    <location>
        <position position="48"/>
    </location>
    <ligand>
        <name>NADP(+)</name>
        <dbReference type="ChEBI" id="CHEBI:58349"/>
    </ligand>
</feature>
<feature type="binding site" evidence="1">
    <location>
        <position position="54"/>
    </location>
    <ligand>
        <name>NADP(+)</name>
        <dbReference type="ChEBI" id="CHEBI:58349"/>
    </ligand>
</feature>
<feature type="binding site" evidence="1">
    <location>
        <begin position="129"/>
        <end position="131"/>
    </location>
    <ligand>
        <name>FMN</name>
        <dbReference type="ChEBI" id="CHEBI:58210"/>
    </ligand>
</feature>
<feature type="binding site" evidence="1">
    <location>
        <begin position="243"/>
        <end position="244"/>
    </location>
    <ligand>
        <name>FMN</name>
        <dbReference type="ChEBI" id="CHEBI:58210"/>
    </ligand>
</feature>
<feature type="binding site" evidence="1">
    <location>
        <position position="288"/>
    </location>
    <ligand>
        <name>FMN</name>
        <dbReference type="ChEBI" id="CHEBI:58210"/>
    </ligand>
</feature>
<feature type="binding site" evidence="1">
    <location>
        <begin position="303"/>
        <end position="307"/>
    </location>
    <ligand>
        <name>FMN</name>
        <dbReference type="ChEBI" id="CHEBI:58210"/>
    </ligand>
</feature>
<feature type="binding site" evidence="1">
    <location>
        <position position="329"/>
    </location>
    <ligand>
        <name>FMN</name>
        <dbReference type="ChEBI" id="CHEBI:58210"/>
    </ligand>
</feature>